<proteinExistence type="inferred from homology"/>
<protein>
    <recommendedName>
        <fullName evidence="1">ATP synthase subunit b, chloroplastic</fullName>
    </recommendedName>
    <alternativeName>
        <fullName evidence="1">ATP synthase F(0) sector subunit b</fullName>
    </alternativeName>
    <alternativeName>
        <fullName evidence="1">ATPase subunit I</fullName>
    </alternativeName>
</protein>
<keyword id="KW-0066">ATP synthesis</keyword>
<keyword id="KW-0067">ATP-binding</keyword>
<keyword id="KW-0138">CF(0)</keyword>
<keyword id="KW-0150">Chloroplast</keyword>
<keyword id="KW-0375">Hydrogen ion transport</keyword>
<keyword id="KW-0406">Ion transport</keyword>
<keyword id="KW-0472">Membrane</keyword>
<keyword id="KW-0547">Nucleotide-binding</keyword>
<keyword id="KW-0934">Plastid</keyword>
<keyword id="KW-0793">Thylakoid</keyword>
<keyword id="KW-0812">Transmembrane</keyword>
<keyword id="KW-1133">Transmembrane helix</keyword>
<keyword id="KW-0813">Transport</keyword>
<sequence>MKNVIDPFISLSYWPSAGGFGSNTNILETNIINPSVVLSVLIYFGKGVLSNLLDNRKQKILNTIRNSEELCKGAIDQLEKARARLREVEMIGDEIRVNGDSQVEREKEDLINAASENLEQLEDPKNETIYSEQQRAIDQIRQQVSRQALRRTIGTLNSRFKIELHLRTINQNIGLFRTMMNTPD</sequence>
<gene>
    <name evidence="1" type="primary">atpF</name>
</gene>
<comment type="function">
    <text evidence="1">F(1)F(0) ATP synthase produces ATP from ADP in the presence of a proton or sodium gradient. F-type ATPases consist of two structural domains, F(1) containing the extramembraneous catalytic core and F(0) containing the membrane proton channel, linked together by a central stalk and a peripheral stalk. During catalysis, ATP synthesis in the catalytic domain of F(1) is coupled via a rotary mechanism of the central stalk subunits to proton translocation.</text>
</comment>
<comment type="function">
    <text evidence="1">Component of the F(0) channel, it forms part of the peripheral stalk, linking F(1) to F(0).</text>
</comment>
<comment type="subunit">
    <text evidence="1">F-type ATPases have 2 components, F(1) - the catalytic core - and F(0) - the membrane proton channel. F(1) has five subunits: alpha(3), beta(3), gamma(1), delta(1), epsilon(1). F(0) has four main subunits: a(1), b(1), b'(1) and c(10-14). The alpha and beta chains form an alternating ring which encloses part of the gamma chain. F(1) is attached to F(0) by a central stalk formed by the gamma and epsilon chains, while a peripheral stalk is formed by the delta, b and b' chains.</text>
</comment>
<comment type="subcellular location">
    <subcellularLocation>
        <location evidence="1">Plastid</location>
        <location evidence="1">Chloroplast thylakoid membrane</location>
        <topology evidence="1">Single-pass membrane protein</topology>
    </subcellularLocation>
</comment>
<comment type="miscellaneous">
    <text>In plastids the F-type ATPase is also known as CF(1)CF(0).</text>
</comment>
<comment type="similarity">
    <text evidence="1">Belongs to the ATPase B chain family.</text>
</comment>
<name>ATPF_PINKO</name>
<dbReference type="EMBL" id="AY228468">
    <property type="protein sequence ID" value="AAO74142.1"/>
    <property type="molecule type" value="Genomic_DNA"/>
</dbReference>
<dbReference type="RefSeq" id="NP_817147.1">
    <property type="nucleotide sequence ID" value="NC_004677.2"/>
</dbReference>
<dbReference type="SMR" id="Q85WS7"/>
<dbReference type="GeneID" id="806986"/>
<dbReference type="GO" id="GO:0009535">
    <property type="term" value="C:chloroplast thylakoid membrane"/>
    <property type="evidence" value="ECO:0007669"/>
    <property type="project" value="UniProtKB-SubCell"/>
</dbReference>
<dbReference type="GO" id="GO:0045259">
    <property type="term" value="C:proton-transporting ATP synthase complex"/>
    <property type="evidence" value="ECO:0007669"/>
    <property type="project" value="UniProtKB-KW"/>
</dbReference>
<dbReference type="GO" id="GO:0005524">
    <property type="term" value="F:ATP binding"/>
    <property type="evidence" value="ECO:0007669"/>
    <property type="project" value="UniProtKB-KW"/>
</dbReference>
<dbReference type="GO" id="GO:0046933">
    <property type="term" value="F:proton-transporting ATP synthase activity, rotational mechanism"/>
    <property type="evidence" value="ECO:0007669"/>
    <property type="project" value="UniProtKB-UniRule"/>
</dbReference>
<dbReference type="CDD" id="cd06503">
    <property type="entry name" value="ATP-synt_Fo_b"/>
    <property type="match status" value="1"/>
</dbReference>
<dbReference type="HAMAP" id="MF_01398">
    <property type="entry name" value="ATP_synth_b_bprime"/>
    <property type="match status" value="1"/>
</dbReference>
<dbReference type="InterPro" id="IPR002146">
    <property type="entry name" value="ATP_synth_b/b'su_bac/chlpt"/>
</dbReference>
<dbReference type="PANTHER" id="PTHR34264">
    <property type="entry name" value="ATP SYNTHASE SUBUNIT B, CHLOROPLASTIC"/>
    <property type="match status" value="1"/>
</dbReference>
<dbReference type="PANTHER" id="PTHR34264:SF3">
    <property type="entry name" value="ATP SYNTHASE SUBUNIT B, CHLOROPLASTIC"/>
    <property type="match status" value="1"/>
</dbReference>
<dbReference type="Pfam" id="PF00430">
    <property type="entry name" value="ATP-synt_B"/>
    <property type="match status" value="1"/>
</dbReference>
<organism>
    <name type="scientific">Pinus koraiensis</name>
    <name type="common">Korean pine</name>
    <dbReference type="NCBI Taxonomy" id="88728"/>
    <lineage>
        <taxon>Eukaryota</taxon>
        <taxon>Viridiplantae</taxon>
        <taxon>Streptophyta</taxon>
        <taxon>Embryophyta</taxon>
        <taxon>Tracheophyta</taxon>
        <taxon>Spermatophyta</taxon>
        <taxon>Pinopsida</taxon>
        <taxon>Pinidae</taxon>
        <taxon>Conifers I</taxon>
        <taxon>Pinales</taxon>
        <taxon>Pinaceae</taxon>
        <taxon>Pinus</taxon>
        <taxon>Pinus subgen. Strobus</taxon>
    </lineage>
</organism>
<geneLocation type="chloroplast"/>
<evidence type="ECO:0000255" key="1">
    <source>
        <dbReference type="HAMAP-Rule" id="MF_01398"/>
    </source>
</evidence>
<feature type="chain" id="PRO_0000277434" description="ATP synthase subunit b, chloroplastic">
    <location>
        <begin position="1"/>
        <end position="184"/>
    </location>
</feature>
<feature type="transmembrane region" description="Helical" evidence="1">
    <location>
        <begin position="31"/>
        <end position="49"/>
    </location>
</feature>
<accession>Q85WS7</accession>
<reference key="1">
    <citation type="submission" date="2003-02" db="EMBL/GenBank/DDBJ databases">
        <title>Complete nucleotide sequence of Pinus koraiensis.</title>
        <authorList>
            <person name="Noh E.W."/>
            <person name="Lee J.S."/>
            <person name="Choi Y.I."/>
            <person name="Han M.S."/>
            <person name="Yi Y.S."/>
            <person name="Han S.U."/>
        </authorList>
    </citation>
    <scope>NUCLEOTIDE SEQUENCE [LARGE SCALE GENOMIC DNA]</scope>
    <source>
        <strain>KangWon16</strain>
    </source>
</reference>